<reference key="1">
    <citation type="journal article" date="1999" name="Biochem. J.">
        <title>Transcripts encoding the sperm surface protein tMDC II are non-functional in the human.</title>
        <authorList>
            <person name="Frayne J."/>
            <person name="Dimsey E.A."/>
            <person name="Jury J.A."/>
            <person name="Hall L."/>
        </authorList>
    </citation>
    <scope>NUCLEOTIDE SEQUENCE [MRNA] (ISOFORMS 2; 3; 4; 5; 6 AND 7)</scope>
    <scope>FUNCTION</scope>
    <scope>TISSUE SPECIFICITY</scope>
    <scope>ALTERNATIVE SPLICING</scope>
</reference>
<reference key="2">
    <citation type="journal article" date="2006" name="Nature">
        <title>DNA sequence and analysis of human chromosome 8.</title>
        <authorList>
            <person name="Nusbaum C."/>
            <person name="Mikkelsen T.S."/>
            <person name="Zody M.C."/>
            <person name="Asakawa S."/>
            <person name="Taudien S."/>
            <person name="Garber M."/>
            <person name="Kodira C.D."/>
            <person name="Schueler M.G."/>
            <person name="Shimizu A."/>
            <person name="Whittaker C.A."/>
            <person name="Chang J.L."/>
            <person name="Cuomo C.A."/>
            <person name="Dewar K."/>
            <person name="FitzGerald M.G."/>
            <person name="Yang X."/>
            <person name="Allen N.R."/>
            <person name="Anderson S."/>
            <person name="Asakawa T."/>
            <person name="Blechschmidt K."/>
            <person name="Bloom T."/>
            <person name="Borowsky M.L."/>
            <person name="Butler J."/>
            <person name="Cook A."/>
            <person name="Corum B."/>
            <person name="DeArellano K."/>
            <person name="DeCaprio D."/>
            <person name="Dooley K.T."/>
            <person name="Dorris L. III"/>
            <person name="Engels R."/>
            <person name="Gloeckner G."/>
            <person name="Hafez N."/>
            <person name="Hagopian D.S."/>
            <person name="Hall J.L."/>
            <person name="Ishikawa S.K."/>
            <person name="Jaffe D.B."/>
            <person name="Kamat A."/>
            <person name="Kudoh J."/>
            <person name="Lehmann R."/>
            <person name="Lokitsang T."/>
            <person name="Macdonald P."/>
            <person name="Major J.E."/>
            <person name="Matthews C.D."/>
            <person name="Mauceli E."/>
            <person name="Menzel U."/>
            <person name="Mihalev A.H."/>
            <person name="Minoshima S."/>
            <person name="Murayama Y."/>
            <person name="Naylor J.W."/>
            <person name="Nicol R."/>
            <person name="Nguyen C."/>
            <person name="O'Leary S.B."/>
            <person name="O'Neill K."/>
            <person name="Parker S.C.J."/>
            <person name="Polley A."/>
            <person name="Raymond C.K."/>
            <person name="Reichwald K."/>
            <person name="Rodriguez J."/>
            <person name="Sasaki T."/>
            <person name="Schilhabel M."/>
            <person name="Siddiqui R."/>
            <person name="Smith C.L."/>
            <person name="Sneddon T.P."/>
            <person name="Talamas J.A."/>
            <person name="Tenzin P."/>
            <person name="Topham K."/>
            <person name="Venkataraman V."/>
            <person name="Wen G."/>
            <person name="Yamazaki S."/>
            <person name="Young S.K."/>
            <person name="Zeng Q."/>
            <person name="Zimmer A.R."/>
            <person name="Rosenthal A."/>
            <person name="Birren B.W."/>
            <person name="Platzer M."/>
            <person name="Shimizu N."/>
            <person name="Lander E.S."/>
        </authorList>
    </citation>
    <scope>NUCLEOTIDE SEQUENCE [LARGE SCALE GENOMIC DNA]</scope>
</reference>
<reference key="3">
    <citation type="journal article" date="2004" name="Genome Res.">
        <title>The status, quality, and expansion of the NIH full-length cDNA project: the Mammalian Gene Collection (MGC).</title>
        <authorList>
            <consortium name="The MGC Project Team"/>
        </authorList>
    </citation>
    <scope>NUCLEOTIDE SEQUENCE [LARGE SCALE MRNA] (ISOFORMS 1 AND 2)</scope>
    <source>
        <tissue>Testis</tissue>
    </source>
</reference>
<evidence type="ECO:0000250" key="1"/>
<evidence type="ECO:0000250" key="2">
    <source>
        <dbReference type="UniProtKB" id="Q3TTE0"/>
    </source>
</evidence>
<evidence type="ECO:0000255" key="3">
    <source>
        <dbReference type="PROSITE-ProRule" id="PRU00076"/>
    </source>
</evidence>
<evidence type="ECO:0000269" key="4">
    <source>
    </source>
</evidence>
<evidence type="ECO:0000303" key="5">
    <source>
    </source>
</evidence>
<evidence type="ECO:0000303" key="6">
    <source>
    </source>
</evidence>
<evidence type="ECO:0000305" key="7"/>
<dbReference type="EMBL" id="AJ132820">
    <property type="status" value="NOT_ANNOTATED_CDS"/>
    <property type="molecule type" value="mRNA"/>
</dbReference>
<dbReference type="EMBL" id="AJ132821">
    <property type="status" value="NOT_ANNOTATED_CDS"/>
    <property type="molecule type" value="mRNA"/>
</dbReference>
<dbReference type="EMBL" id="AJ132822">
    <property type="status" value="NOT_ANNOTATED_CDS"/>
    <property type="molecule type" value="mRNA"/>
</dbReference>
<dbReference type="EMBL" id="AJ132823">
    <property type="status" value="NOT_ANNOTATED_CDS"/>
    <property type="molecule type" value="mRNA"/>
</dbReference>
<dbReference type="EMBL" id="AJ132824">
    <property type="status" value="NOT_ANNOTATED_CDS"/>
    <property type="molecule type" value="mRNA"/>
</dbReference>
<dbReference type="EMBL" id="AJ132825">
    <property type="status" value="NOT_ANNOTATED_CDS"/>
    <property type="molecule type" value="mRNA"/>
</dbReference>
<dbReference type="EMBL" id="AJ132826">
    <property type="status" value="NOT_ANNOTATED_CDS"/>
    <property type="molecule type" value="mRNA"/>
</dbReference>
<dbReference type="EMBL" id="AJ132827">
    <property type="status" value="NOT_ANNOTATED_CDS"/>
    <property type="molecule type" value="mRNA"/>
</dbReference>
<dbReference type="EMBL" id="AC105185">
    <property type="status" value="NOT_ANNOTATED_CDS"/>
    <property type="molecule type" value="Genomic_DNA"/>
</dbReference>
<dbReference type="EMBL" id="BC026083">
    <property type="status" value="NOT_ANNOTATED_CDS"/>
    <property type="molecule type" value="mRNA"/>
</dbReference>
<dbReference type="EMBL" id="BC067864">
    <property type="status" value="NOT_ANNOTATED_CDS"/>
    <property type="molecule type" value="mRNA"/>
</dbReference>
<dbReference type="SMR" id="Q6NVV9"/>
<dbReference type="GlyGen" id="Q6NVV9">
    <property type="glycosylation" value="1 site, 1 O-linked glycan (1 site)"/>
</dbReference>
<dbReference type="BioMuta" id="HGNC:212"/>
<dbReference type="DMDM" id="121946258"/>
<dbReference type="jPOST" id="Q6NVV9"/>
<dbReference type="PeptideAtlas" id="Q6NVV9"/>
<dbReference type="TopDownProteomics" id="Q6NVV9-7">
    <molecule id="Q6NVV9-7"/>
</dbReference>
<dbReference type="AGR" id="HGNC:212"/>
<dbReference type="GeneCards" id="ADAM5"/>
<dbReference type="HGNC" id="HGNC:212">
    <property type="gene designation" value="ADAM5"/>
</dbReference>
<dbReference type="neXtProt" id="NX_Q6NVV9"/>
<dbReference type="InParanoid" id="Q6NVV9"/>
<dbReference type="PAN-GO" id="Q6NVV9">
    <property type="GO annotations" value="2 GO annotations based on evolutionary models"/>
</dbReference>
<dbReference type="PhylomeDB" id="Q6NVV9"/>
<dbReference type="ChiTaRS" id="ADAM5">
    <property type="organism name" value="human"/>
</dbReference>
<dbReference type="Pharos" id="Q6NVV9">
    <property type="development level" value="Tdark"/>
</dbReference>
<dbReference type="PRO" id="PR:Q6NVV9"/>
<dbReference type="Proteomes" id="UP000005640">
    <property type="component" value="Unplaced"/>
</dbReference>
<dbReference type="RNAct" id="Q6NVV9">
    <property type="molecule type" value="protein"/>
</dbReference>
<dbReference type="Gene3D" id="4.10.70.10">
    <property type="entry name" value="Disintegrin domain"/>
    <property type="match status" value="1"/>
</dbReference>
<dbReference type="InterPro" id="IPR006586">
    <property type="entry name" value="ADAM_Cys-rich"/>
</dbReference>
<dbReference type="InterPro" id="IPR001762">
    <property type="entry name" value="Disintegrin_dom"/>
</dbReference>
<dbReference type="InterPro" id="IPR036436">
    <property type="entry name" value="Disintegrin_dom_sf"/>
</dbReference>
<dbReference type="InterPro" id="IPR000742">
    <property type="entry name" value="EGF-like_dom"/>
</dbReference>
<dbReference type="PANTHER" id="PTHR11905">
    <property type="entry name" value="ADAM A DISINTEGRIN AND METALLOPROTEASE DOMAIN"/>
    <property type="match status" value="1"/>
</dbReference>
<dbReference type="PANTHER" id="PTHR11905:SF28">
    <property type="entry name" value="DISINTEGRIN AND METALLOPROTEINASE DOMAIN-CONTAINING PROTEIN 5"/>
    <property type="match status" value="1"/>
</dbReference>
<dbReference type="Pfam" id="PF08516">
    <property type="entry name" value="ADAM_CR"/>
    <property type="match status" value="1"/>
</dbReference>
<dbReference type="SMART" id="SM00608">
    <property type="entry name" value="ACR"/>
    <property type="match status" value="1"/>
</dbReference>
<dbReference type="SMART" id="SM00050">
    <property type="entry name" value="DISIN"/>
    <property type="match status" value="1"/>
</dbReference>
<dbReference type="SUPFAM" id="SSF57552">
    <property type="entry name" value="Blood coagulation inhibitor (disintegrin)"/>
    <property type="match status" value="1"/>
</dbReference>
<dbReference type="PROSITE" id="PS01186">
    <property type="entry name" value="EGF_2"/>
    <property type="match status" value="1"/>
</dbReference>
<dbReference type="PROSITE" id="PS50026">
    <property type="entry name" value="EGF_3"/>
    <property type="match status" value="1"/>
</dbReference>
<gene>
    <name type="primary">ADAM5</name>
    <name type="synonym">ADAM5P</name>
    <name type="synonym">TMDC2</name>
</gene>
<sequence length="412" mass="47181">MQTSILIKSSCRPQFQRRFHHRMQKQIQNIISILSSASVINSYDENDIRHSKPLLVQMDCNYNGYVAGIPNSLVTLSVCSGLRGTMQLKNISYGIEPMEAVSGFIHKIYEEKYADTNILLEENDTYTWFNSEYQVRKSSEKTDFIKLFPRYIEMHIVVDKNLFKPANMICRKSVGKECDFTEYCNGDLPYCLPDTYVRDGEYCDSGGAFCFQGKCRTFDKQCDDLIGRGSRGAPVFCYDEINTRGDNFGNCGTAHCLFQHILCGKLVCTWEHRDLISRPNLSVIYAHVRDQTCVSTYLPRRTPPPVNSPISITSYYSAEDRDETFVQDGSMCGPDMYCFEMHCKHVRFLMNLKLCDASNHCDRHGVCNNFNHCHCEKGYNPPYCQPKQGAFGSIDDGHLVPPTERSYMEEGR</sequence>
<comment type="function">
    <text evidence="1 4">This is a non catalytic metalloprotease-like protein.</text>
</comment>
<comment type="subunit">
    <text evidence="2">Interacts with TEX101.</text>
</comment>
<comment type="alternative products">
    <event type="alternative splicing"/>
    <isoform>
        <id>Q6NVV9-1</id>
        <name>1</name>
        <sequence type="displayed"/>
    </isoform>
    <isoform>
        <id>Q6NVV9-2</id>
        <name>2</name>
        <sequence type="described" ref="VSP_035340 VSP_035343 VSP_035344"/>
    </isoform>
    <isoform>
        <id>Q6NVV9-3</id>
        <name>3</name>
        <sequence type="described" ref="VSP_035339 VSP_035341"/>
    </isoform>
    <isoform>
        <id>Q6NVV9-4</id>
        <name>4</name>
        <sequence type="described" ref="VSP_035340"/>
    </isoform>
    <isoform>
        <id>Q6NVV9-5</id>
        <name>5</name>
        <sequence type="described" ref="VSP_035340 VSP_035342"/>
    </isoform>
    <isoform>
        <id>Q6NVV9-6</id>
        <name>6</name>
        <sequence type="described" ref="VSP_035345"/>
    </isoform>
    <isoform>
        <id>Q6NVV9-7</id>
        <name>7</name>
        <sequence type="described" ref="VSP_035346"/>
    </isoform>
</comment>
<comment type="tissue specificity">
    <text evidence="4">Highly expressed in testis.</text>
</comment>
<comment type="caution">
    <text evidence="7">Could be the product of a pseudogene. Not expected to have protease activity.</text>
</comment>
<protein>
    <recommendedName>
        <fullName>Putative disintegrin and metalloproteinase domain-containing protein 5</fullName>
    </recommendedName>
    <alternativeName>
        <fullName>Putative transmembrane metalloproteinase-like, disintegrin-like, and cysteine-rich protein II</fullName>
        <shortName>tMDC II</shortName>
    </alternativeName>
</protein>
<proteinExistence type="uncertain"/>
<organism>
    <name type="scientific">Homo sapiens</name>
    <name type="common">Human</name>
    <dbReference type="NCBI Taxonomy" id="9606"/>
    <lineage>
        <taxon>Eukaryota</taxon>
        <taxon>Metazoa</taxon>
        <taxon>Chordata</taxon>
        <taxon>Craniata</taxon>
        <taxon>Vertebrata</taxon>
        <taxon>Euteleostomi</taxon>
        <taxon>Mammalia</taxon>
        <taxon>Eutheria</taxon>
        <taxon>Euarchontoglires</taxon>
        <taxon>Primates</taxon>
        <taxon>Haplorrhini</taxon>
        <taxon>Catarrhini</taxon>
        <taxon>Hominidae</taxon>
        <taxon>Homo</taxon>
    </lineage>
</organism>
<keyword id="KW-0025">Alternative splicing</keyword>
<keyword id="KW-0245">EGF-like domain</keyword>
<keyword id="KW-1185">Reference proteome</keyword>
<accession>Q6NVV9</accession>
<accession>A8MW71</accession>
<accession>Q4G196</accession>
<feature type="chain" id="PRO_0000349304" description="Putative disintegrin and metalloproteinase domain-containing protein 5">
    <location>
        <begin position="1"/>
        <end position="412"/>
    </location>
</feature>
<feature type="domain" description="Disintegrin">
    <location>
        <begin position="111"/>
        <end position="199"/>
    </location>
</feature>
<feature type="domain" description="EGF-like" evidence="3">
    <location>
        <begin position="351"/>
        <end position="385"/>
    </location>
</feature>
<feature type="splice variant" id="VSP_035339" description="In isoform 3." evidence="5">
    <location>
        <begin position="1"/>
        <end position="84"/>
    </location>
</feature>
<feature type="splice variant" id="VSP_035340" description="In isoform 2, isoform 4 and isoform 5." evidence="5 6">
    <location>
        <begin position="1"/>
        <end position="57"/>
    </location>
</feature>
<feature type="splice variant" id="VSP_035341" description="In isoform 3." evidence="5">
    <original>TMQLKNISYGIEPMEAVSGFIHKIYEEKYADTNILLEENDTYTWFNSEYQVRKSSEKTDFIKLFPRYIEMHIVVDKNL</original>
    <variation>MTLILGLIQSIKSEKVQKYSGGVKDFNICSLDDFKYISSHNGLTCLQTNPLEMPHRRICGNGLLEGSEECDCGTKD</variation>
    <location>
        <begin position="85"/>
        <end position="162"/>
    </location>
</feature>
<feature type="splice variant" id="VSP_035342" description="In isoform 5." evidence="5">
    <location>
        <begin position="141"/>
        <end position="162"/>
    </location>
</feature>
<feature type="splice variant" id="VSP_035343" description="In isoform 2." evidence="5 6">
    <original>FKPANMIC</original>
    <variation>VLWWCKGF</variation>
    <location>
        <begin position="163"/>
        <end position="170"/>
    </location>
</feature>
<feature type="splice variant" id="VSP_035344" description="In isoform 2." evidence="5 6">
    <location>
        <begin position="171"/>
        <end position="412"/>
    </location>
</feature>
<feature type="splice variant" id="VSP_035345" description="In isoform 6." evidence="5">
    <location>
        <begin position="337"/>
        <end position="365"/>
    </location>
</feature>
<feature type="splice variant" id="VSP_035346" description="In isoform 7." evidence="5">
    <original>ERSYMEEGR</original>
    <variation>APVS</variation>
    <location>
        <begin position="404"/>
        <end position="412"/>
    </location>
</feature>
<name>ADAM5_HUMAN</name>